<dbReference type="EC" id="1.2.1.41" evidence="1"/>
<dbReference type="EMBL" id="CU468230">
    <property type="protein sequence ID" value="CAP02300.1"/>
    <property type="molecule type" value="Genomic_DNA"/>
</dbReference>
<dbReference type="SMR" id="B0VKT1"/>
<dbReference type="KEGG" id="abm:ABSDF3014"/>
<dbReference type="HOGENOM" id="CLU_030231_0_0_6"/>
<dbReference type="UniPathway" id="UPA00098">
    <property type="reaction ID" value="UER00360"/>
</dbReference>
<dbReference type="Proteomes" id="UP000001741">
    <property type="component" value="Chromosome"/>
</dbReference>
<dbReference type="GO" id="GO:0005737">
    <property type="term" value="C:cytoplasm"/>
    <property type="evidence" value="ECO:0007669"/>
    <property type="project" value="UniProtKB-SubCell"/>
</dbReference>
<dbReference type="GO" id="GO:0004350">
    <property type="term" value="F:glutamate-5-semialdehyde dehydrogenase activity"/>
    <property type="evidence" value="ECO:0007669"/>
    <property type="project" value="UniProtKB-UniRule"/>
</dbReference>
<dbReference type="GO" id="GO:0050661">
    <property type="term" value="F:NADP binding"/>
    <property type="evidence" value="ECO:0007669"/>
    <property type="project" value="InterPro"/>
</dbReference>
<dbReference type="GO" id="GO:0055129">
    <property type="term" value="P:L-proline biosynthetic process"/>
    <property type="evidence" value="ECO:0007669"/>
    <property type="project" value="UniProtKB-UniRule"/>
</dbReference>
<dbReference type="CDD" id="cd07079">
    <property type="entry name" value="ALDH_F18-19_ProA-GPR"/>
    <property type="match status" value="1"/>
</dbReference>
<dbReference type="FunFam" id="3.40.309.10:FF:000006">
    <property type="entry name" value="Gamma-glutamyl phosphate reductase"/>
    <property type="match status" value="1"/>
</dbReference>
<dbReference type="Gene3D" id="3.40.605.10">
    <property type="entry name" value="Aldehyde Dehydrogenase, Chain A, domain 1"/>
    <property type="match status" value="1"/>
</dbReference>
<dbReference type="Gene3D" id="3.40.309.10">
    <property type="entry name" value="Aldehyde Dehydrogenase, Chain A, domain 2"/>
    <property type="match status" value="1"/>
</dbReference>
<dbReference type="HAMAP" id="MF_00412">
    <property type="entry name" value="ProA"/>
    <property type="match status" value="1"/>
</dbReference>
<dbReference type="InterPro" id="IPR016161">
    <property type="entry name" value="Ald_DH/histidinol_DH"/>
</dbReference>
<dbReference type="InterPro" id="IPR016163">
    <property type="entry name" value="Ald_DH_C"/>
</dbReference>
<dbReference type="InterPro" id="IPR016162">
    <property type="entry name" value="Ald_DH_N"/>
</dbReference>
<dbReference type="InterPro" id="IPR015590">
    <property type="entry name" value="Aldehyde_DH_dom"/>
</dbReference>
<dbReference type="InterPro" id="IPR020593">
    <property type="entry name" value="G-glutamylP_reductase_CS"/>
</dbReference>
<dbReference type="InterPro" id="IPR012134">
    <property type="entry name" value="Glu-5-SA_DH"/>
</dbReference>
<dbReference type="InterPro" id="IPR000965">
    <property type="entry name" value="GPR_dom"/>
</dbReference>
<dbReference type="NCBIfam" id="NF001221">
    <property type="entry name" value="PRK00197.1"/>
    <property type="match status" value="1"/>
</dbReference>
<dbReference type="NCBIfam" id="TIGR00407">
    <property type="entry name" value="proA"/>
    <property type="match status" value="1"/>
</dbReference>
<dbReference type="PANTHER" id="PTHR11063:SF8">
    <property type="entry name" value="DELTA-1-PYRROLINE-5-CARBOXYLATE SYNTHASE"/>
    <property type="match status" value="1"/>
</dbReference>
<dbReference type="PANTHER" id="PTHR11063">
    <property type="entry name" value="GLUTAMATE SEMIALDEHYDE DEHYDROGENASE"/>
    <property type="match status" value="1"/>
</dbReference>
<dbReference type="Pfam" id="PF00171">
    <property type="entry name" value="Aldedh"/>
    <property type="match status" value="2"/>
</dbReference>
<dbReference type="PIRSF" id="PIRSF000151">
    <property type="entry name" value="GPR"/>
    <property type="match status" value="1"/>
</dbReference>
<dbReference type="SUPFAM" id="SSF53720">
    <property type="entry name" value="ALDH-like"/>
    <property type="match status" value="1"/>
</dbReference>
<dbReference type="PROSITE" id="PS01223">
    <property type="entry name" value="PROA"/>
    <property type="match status" value="1"/>
</dbReference>
<protein>
    <recommendedName>
        <fullName evidence="1">Gamma-glutamyl phosphate reductase</fullName>
        <shortName evidence="1">GPR</shortName>
        <ecNumber evidence="1">1.2.1.41</ecNumber>
    </recommendedName>
    <alternativeName>
        <fullName evidence="1">Glutamate-5-semialdehyde dehydrogenase</fullName>
    </alternativeName>
    <alternativeName>
        <fullName evidence="1">Glutamyl-gamma-semialdehyde dehydrogenase</fullName>
        <shortName evidence="1">GSA dehydrogenase</shortName>
    </alternativeName>
</protein>
<name>PROA_ACIBS</name>
<keyword id="KW-0028">Amino-acid biosynthesis</keyword>
<keyword id="KW-0963">Cytoplasm</keyword>
<keyword id="KW-0521">NADP</keyword>
<keyword id="KW-0560">Oxidoreductase</keyword>
<keyword id="KW-0641">Proline biosynthesis</keyword>
<comment type="function">
    <text evidence="1">Catalyzes the NADPH-dependent reduction of L-glutamate 5-phosphate into L-glutamate 5-semialdehyde and phosphate. The product spontaneously undergoes cyclization to form 1-pyrroline-5-carboxylate.</text>
</comment>
<comment type="catalytic activity">
    <reaction evidence="1">
        <text>L-glutamate 5-semialdehyde + phosphate + NADP(+) = L-glutamyl 5-phosphate + NADPH + H(+)</text>
        <dbReference type="Rhea" id="RHEA:19541"/>
        <dbReference type="ChEBI" id="CHEBI:15378"/>
        <dbReference type="ChEBI" id="CHEBI:43474"/>
        <dbReference type="ChEBI" id="CHEBI:57783"/>
        <dbReference type="ChEBI" id="CHEBI:58066"/>
        <dbReference type="ChEBI" id="CHEBI:58274"/>
        <dbReference type="ChEBI" id="CHEBI:58349"/>
        <dbReference type="EC" id="1.2.1.41"/>
    </reaction>
</comment>
<comment type="pathway">
    <text evidence="1">Amino-acid biosynthesis; L-proline biosynthesis; L-glutamate 5-semialdehyde from L-glutamate: step 2/2.</text>
</comment>
<comment type="subcellular location">
    <subcellularLocation>
        <location evidence="1">Cytoplasm</location>
    </subcellularLocation>
</comment>
<comment type="similarity">
    <text evidence="1">Belongs to the gamma-glutamyl phosphate reductase family.</text>
</comment>
<organism>
    <name type="scientific">Acinetobacter baumannii (strain SDF)</name>
    <dbReference type="NCBI Taxonomy" id="509170"/>
    <lineage>
        <taxon>Bacteria</taxon>
        <taxon>Pseudomonadati</taxon>
        <taxon>Pseudomonadota</taxon>
        <taxon>Gammaproteobacteria</taxon>
        <taxon>Moraxellales</taxon>
        <taxon>Moraxellaceae</taxon>
        <taxon>Acinetobacter</taxon>
        <taxon>Acinetobacter calcoaceticus/baumannii complex</taxon>
    </lineage>
</organism>
<evidence type="ECO:0000255" key="1">
    <source>
        <dbReference type="HAMAP-Rule" id="MF_00412"/>
    </source>
</evidence>
<accession>B0VKT1</accession>
<sequence length="421" mass="45696">MQDSIEQYMQKVGQQARDASRVLTSASTSLKNHALSAIYTALENNQAAILAANQIDMEKGRSNQLDSALLDRLELTPARFKGMLQGLKDVIALVDPIGEITDLAYRPTGIQIGKMRVPLGVVGMIYESRPNVTLEAASLAIKSGNAIILRGGSEALESNKAIAEAVKHGLKVAGLPEHSVQVIETSDRAAVGHLITMAEYVDVIVPRGGKSLIERVTNEARIPVIKHLDGNCHVFVEAQADLQKALPITLNAKTHRYGVCNAMETLLVDEKIAEVFLPHIAELYAEKQVELRGCPETHRILGTTVKPATEEDWYTEYLGPILAVKVVSGIDEAIDHINKYGSHHTDAIVTENYTLARQFLARVDSSSVVVNASTRFADGFEYGLGAEIGISTDKIHARGPVGLEGLTSQKWIVLGDGQIRQ</sequence>
<proteinExistence type="inferred from homology"/>
<reference key="1">
    <citation type="journal article" date="2008" name="PLoS ONE">
        <title>Comparative analysis of Acinetobacters: three genomes for three lifestyles.</title>
        <authorList>
            <person name="Vallenet D."/>
            <person name="Nordmann P."/>
            <person name="Barbe V."/>
            <person name="Poirel L."/>
            <person name="Mangenot S."/>
            <person name="Bataille E."/>
            <person name="Dossat C."/>
            <person name="Gas S."/>
            <person name="Kreimeyer A."/>
            <person name="Lenoble P."/>
            <person name="Oztas S."/>
            <person name="Poulain J."/>
            <person name="Segurens B."/>
            <person name="Robert C."/>
            <person name="Abergel C."/>
            <person name="Claverie J.-M."/>
            <person name="Raoult D."/>
            <person name="Medigue C."/>
            <person name="Weissenbach J."/>
            <person name="Cruveiller S."/>
        </authorList>
    </citation>
    <scope>NUCLEOTIDE SEQUENCE [LARGE SCALE GENOMIC DNA]</scope>
    <source>
        <strain>SDF</strain>
    </source>
</reference>
<feature type="chain" id="PRO_1000123768" description="Gamma-glutamyl phosphate reductase">
    <location>
        <begin position="1"/>
        <end position="421"/>
    </location>
</feature>
<gene>
    <name evidence="1" type="primary">proA</name>
    <name type="ordered locus">ABSDF3014</name>
</gene>